<sequence length="438" mass="48594">MQTIYTRITDIKGNLITVEAEGASLGELVQIERADGRSSYASVLRFDAKKVTLQVFGGTSGLSTGDKVVFLGRPMEVVYGDSLLGRRFNGTGKPIDNEEICFGEPIPITTPSFNPVCRIVPREMVRTNIPMIDMFNCLVKSQKIPIFSSSGENHNALLMRIAAQTDADIVIIGGMGLTFVDYSFFVEESQRLGFADKCVMFIHKAVDAPVECVLIPDMALACAERFALEQKKNVLVLLTDMTAFADALKEIAITMDQIPANRGYPGSLYSDLAVRYEKAVDIAQGGSITLISVTTMPGDDITHPVPDNTGFITEGQFYLKDNRIDPFGSLSRLKQLVIGKRTREDHGDLANALIRLYADSRKSAERMSMGFKLSNWDKKLLAFAELFETRLMSLEVNIPLEEALDIGWKILAQSFHSEEVGIKEQLIQKYWPKACLHK</sequence>
<feature type="chain" id="PRO_0000144674" description="V-type ATP synthase beta chain">
    <location>
        <begin position="1"/>
        <end position="438"/>
    </location>
</feature>
<organism>
    <name type="scientific">Chlamydia muridarum (strain MoPn / Nigg)</name>
    <dbReference type="NCBI Taxonomy" id="243161"/>
    <lineage>
        <taxon>Bacteria</taxon>
        <taxon>Pseudomonadati</taxon>
        <taxon>Chlamydiota</taxon>
        <taxon>Chlamydiia</taxon>
        <taxon>Chlamydiales</taxon>
        <taxon>Chlamydiaceae</taxon>
        <taxon>Chlamydia/Chlamydophila group</taxon>
        <taxon>Chlamydia</taxon>
    </lineage>
</organism>
<keyword id="KW-0066">ATP synthesis</keyword>
<keyword id="KW-0375">Hydrogen ion transport</keyword>
<keyword id="KW-0406">Ion transport</keyword>
<keyword id="KW-0813">Transport</keyword>
<dbReference type="EMBL" id="AE002160">
    <property type="protein sequence ID" value="AAF39415.1"/>
    <property type="molecule type" value="Genomic_DNA"/>
</dbReference>
<dbReference type="PIR" id="D81687">
    <property type="entry name" value="D81687"/>
</dbReference>
<dbReference type="RefSeq" id="WP_010230897.1">
    <property type="nucleotide sequence ID" value="NZ_CP063055.1"/>
</dbReference>
<dbReference type="SMR" id="Q9PK86"/>
<dbReference type="GeneID" id="1245940"/>
<dbReference type="KEGG" id="cmu:TC_0581"/>
<dbReference type="eggNOG" id="COG1156">
    <property type="taxonomic scope" value="Bacteria"/>
</dbReference>
<dbReference type="HOGENOM" id="CLU_022916_2_0_0"/>
<dbReference type="OrthoDB" id="9802718at2"/>
<dbReference type="Proteomes" id="UP000000800">
    <property type="component" value="Chromosome"/>
</dbReference>
<dbReference type="GO" id="GO:0005524">
    <property type="term" value="F:ATP binding"/>
    <property type="evidence" value="ECO:0007669"/>
    <property type="project" value="UniProtKB-UniRule"/>
</dbReference>
<dbReference type="GO" id="GO:0046933">
    <property type="term" value="F:proton-transporting ATP synthase activity, rotational mechanism"/>
    <property type="evidence" value="ECO:0007669"/>
    <property type="project" value="UniProtKB-UniRule"/>
</dbReference>
<dbReference type="GO" id="GO:0042777">
    <property type="term" value="P:proton motive force-driven plasma membrane ATP synthesis"/>
    <property type="evidence" value="ECO:0007669"/>
    <property type="project" value="UniProtKB-UniRule"/>
</dbReference>
<dbReference type="CDD" id="cd18118">
    <property type="entry name" value="ATP-synt_V_A-type_beta_N"/>
    <property type="match status" value="1"/>
</dbReference>
<dbReference type="CDD" id="cd01135">
    <property type="entry name" value="V_A-ATPase_B"/>
    <property type="match status" value="1"/>
</dbReference>
<dbReference type="Gene3D" id="3.40.50.12240">
    <property type="match status" value="1"/>
</dbReference>
<dbReference type="HAMAP" id="MF_00310">
    <property type="entry name" value="ATP_synth_B_arch"/>
    <property type="match status" value="1"/>
</dbReference>
<dbReference type="InterPro" id="IPR055190">
    <property type="entry name" value="ATP-synt_VA_C"/>
</dbReference>
<dbReference type="InterPro" id="IPR004100">
    <property type="entry name" value="ATPase_F1/V1/A1_a/bsu_N"/>
</dbReference>
<dbReference type="InterPro" id="IPR000194">
    <property type="entry name" value="ATPase_F1/V1/A1_a/bsu_nucl-bd"/>
</dbReference>
<dbReference type="InterPro" id="IPR027417">
    <property type="entry name" value="P-loop_NTPase"/>
</dbReference>
<dbReference type="InterPro" id="IPR022879">
    <property type="entry name" value="V-ATPase_su_B/beta"/>
</dbReference>
<dbReference type="NCBIfam" id="NF002555">
    <property type="entry name" value="PRK02118.1"/>
    <property type="match status" value="1"/>
</dbReference>
<dbReference type="NCBIfam" id="NF003235">
    <property type="entry name" value="PRK04196.1"/>
    <property type="match status" value="1"/>
</dbReference>
<dbReference type="PANTHER" id="PTHR43389">
    <property type="entry name" value="V-TYPE PROTON ATPASE SUBUNIT B"/>
    <property type="match status" value="1"/>
</dbReference>
<dbReference type="PANTHER" id="PTHR43389:SF4">
    <property type="entry name" value="V-TYPE PROTON ATPASE SUBUNIT B"/>
    <property type="match status" value="1"/>
</dbReference>
<dbReference type="Pfam" id="PF00006">
    <property type="entry name" value="ATP-synt_ab"/>
    <property type="match status" value="1"/>
</dbReference>
<dbReference type="Pfam" id="PF02874">
    <property type="entry name" value="ATP-synt_ab_N"/>
    <property type="match status" value="1"/>
</dbReference>
<dbReference type="Pfam" id="PF22919">
    <property type="entry name" value="ATP-synt_VA_C"/>
    <property type="match status" value="1"/>
</dbReference>
<dbReference type="SUPFAM" id="SSF52540">
    <property type="entry name" value="P-loop containing nucleoside triphosphate hydrolases"/>
    <property type="match status" value="1"/>
</dbReference>
<reference key="1">
    <citation type="journal article" date="2000" name="Nucleic Acids Res.">
        <title>Genome sequences of Chlamydia trachomatis MoPn and Chlamydia pneumoniae AR39.</title>
        <authorList>
            <person name="Read T.D."/>
            <person name="Brunham R.C."/>
            <person name="Shen C."/>
            <person name="Gill S.R."/>
            <person name="Heidelberg J.F."/>
            <person name="White O."/>
            <person name="Hickey E.K."/>
            <person name="Peterson J.D."/>
            <person name="Utterback T.R."/>
            <person name="Berry K.J."/>
            <person name="Bass S."/>
            <person name="Linher K.D."/>
            <person name="Weidman J.F."/>
            <person name="Khouri H.M."/>
            <person name="Craven B."/>
            <person name="Bowman C."/>
            <person name="Dodson R.J."/>
            <person name="Gwinn M.L."/>
            <person name="Nelson W.C."/>
            <person name="DeBoy R.T."/>
            <person name="Kolonay J.F."/>
            <person name="McClarty G."/>
            <person name="Salzberg S.L."/>
            <person name="Eisen J.A."/>
            <person name="Fraser C.M."/>
        </authorList>
    </citation>
    <scope>NUCLEOTIDE SEQUENCE [LARGE SCALE GENOMIC DNA]</scope>
    <source>
        <strain>MoPn / Nigg</strain>
    </source>
</reference>
<comment type="function">
    <text>Produces ATP from ADP in the presence of a proton gradient across the membrane. The V-type beta chain is a regulatory subunit.</text>
</comment>
<comment type="similarity">
    <text evidence="1">Belongs to the ATPase alpha/beta chains family.</text>
</comment>
<evidence type="ECO:0000305" key="1"/>
<protein>
    <recommendedName>
        <fullName>V-type ATP synthase beta chain</fullName>
    </recommendedName>
    <alternativeName>
        <fullName>V-ATPase subunit B</fullName>
    </alternativeName>
</protein>
<name>VATB_CHLMU</name>
<gene>
    <name type="primary">atpB</name>
    <name type="ordered locus">TC_0581</name>
</gene>
<proteinExistence type="inferred from homology"/>
<accession>Q9PK86</accession>